<comment type="subcellular location">
    <subcellularLocation>
        <location evidence="2">Cytoplasm</location>
    </subcellularLocation>
</comment>
<gene>
    <name type="ORF">SPAC29B12.08</name>
</gene>
<accession>O14030</accession>
<keyword id="KW-0963">Cytoplasm</keyword>
<keyword id="KW-1185">Reference proteome</keyword>
<reference key="1">
    <citation type="journal article" date="2002" name="Nature">
        <title>The genome sequence of Schizosaccharomyces pombe.</title>
        <authorList>
            <person name="Wood V."/>
            <person name="Gwilliam R."/>
            <person name="Rajandream M.A."/>
            <person name="Lyne M.H."/>
            <person name="Lyne R."/>
            <person name="Stewart A."/>
            <person name="Sgouros J.G."/>
            <person name="Peat N."/>
            <person name="Hayles J."/>
            <person name="Baker S.G."/>
            <person name="Basham D."/>
            <person name="Bowman S."/>
            <person name="Brooks K."/>
            <person name="Brown D."/>
            <person name="Brown S."/>
            <person name="Chillingworth T."/>
            <person name="Churcher C.M."/>
            <person name="Collins M."/>
            <person name="Connor R."/>
            <person name="Cronin A."/>
            <person name="Davis P."/>
            <person name="Feltwell T."/>
            <person name="Fraser A."/>
            <person name="Gentles S."/>
            <person name="Goble A."/>
            <person name="Hamlin N."/>
            <person name="Harris D.E."/>
            <person name="Hidalgo J."/>
            <person name="Hodgson G."/>
            <person name="Holroyd S."/>
            <person name="Hornsby T."/>
            <person name="Howarth S."/>
            <person name="Huckle E.J."/>
            <person name="Hunt S."/>
            <person name="Jagels K."/>
            <person name="James K.D."/>
            <person name="Jones L."/>
            <person name="Jones M."/>
            <person name="Leather S."/>
            <person name="McDonald S."/>
            <person name="McLean J."/>
            <person name="Mooney P."/>
            <person name="Moule S."/>
            <person name="Mungall K.L."/>
            <person name="Murphy L.D."/>
            <person name="Niblett D."/>
            <person name="Odell C."/>
            <person name="Oliver K."/>
            <person name="O'Neil S."/>
            <person name="Pearson D."/>
            <person name="Quail M.A."/>
            <person name="Rabbinowitsch E."/>
            <person name="Rutherford K.M."/>
            <person name="Rutter S."/>
            <person name="Saunders D."/>
            <person name="Seeger K."/>
            <person name="Sharp S."/>
            <person name="Skelton J."/>
            <person name="Simmonds M.N."/>
            <person name="Squares R."/>
            <person name="Squares S."/>
            <person name="Stevens K."/>
            <person name="Taylor K."/>
            <person name="Taylor R.G."/>
            <person name="Tivey A."/>
            <person name="Walsh S.V."/>
            <person name="Warren T."/>
            <person name="Whitehead S."/>
            <person name="Woodward J.R."/>
            <person name="Volckaert G."/>
            <person name="Aert R."/>
            <person name="Robben J."/>
            <person name="Grymonprez B."/>
            <person name="Weltjens I."/>
            <person name="Vanstreels E."/>
            <person name="Rieger M."/>
            <person name="Schaefer M."/>
            <person name="Mueller-Auer S."/>
            <person name="Gabel C."/>
            <person name="Fuchs M."/>
            <person name="Duesterhoeft A."/>
            <person name="Fritzc C."/>
            <person name="Holzer E."/>
            <person name="Moestl D."/>
            <person name="Hilbert H."/>
            <person name="Borzym K."/>
            <person name="Langer I."/>
            <person name="Beck A."/>
            <person name="Lehrach H."/>
            <person name="Reinhardt R."/>
            <person name="Pohl T.M."/>
            <person name="Eger P."/>
            <person name="Zimmermann W."/>
            <person name="Wedler H."/>
            <person name="Wambutt R."/>
            <person name="Purnelle B."/>
            <person name="Goffeau A."/>
            <person name="Cadieu E."/>
            <person name="Dreano S."/>
            <person name="Gloux S."/>
            <person name="Lelaure V."/>
            <person name="Mottier S."/>
            <person name="Galibert F."/>
            <person name="Aves S.J."/>
            <person name="Xiang Z."/>
            <person name="Hunt C."/>
            <person name="Moore K."/>
            <person name="Hurst S.M."/>
            <person name="Lucas M."/>
            <person name="Rochet M."/>
            <person name="Gaillardin C."/>
            <person name="Tallada V.A."/>
            <person name="Garzon A."/>
            <person name="Thode G."/>
            <person name="Daga R.R."/>
            <person name="Cruzado L."/>
            <person name="Jimenez J."/>
            <person name="Sanchez M."/>
            <person name="del Rey F."/>
            <person name="Benito J."/>
            <person name="Dominguez A."/>
            <person name="Revuelta J.L."/>
            <person name="Moreno S."/>
            <person name="Armstrong J."/>
            <person name="Forsburg S.L."/>
            <person name="Cerutti L."/>
            <person name="Lowe T."/>
            <person name="McCombie W.R."/>
            <person name="Paulsen I."/>
            <person name="Potashkin J."/>
            <person name="Shpakovski G.V."/>
            <person name="Ussery D."/>
            <person name="Barrell B.G."/>
            <person name="Nurse P."/>
        </authorList>
    </citation>
    <scope>NUCLEOTIDE SEQUENCE [LARGE SCALE GENOMIC DNA]</scope>
    <source>
        <strain>972 / ATCC 24843</strain>
    </source>
</reference>
<reference key="2">
    <citation type="journal article" date="2011" name="Science">
        <title>Comparative functional genomics of the fission yeasts.</title>
        <authorList>
            <person name="Rhind N."/>
            <person name="Chen Z."/>
            <person name="Yassour M."/>
            <person name="Thompson D.A."/>
            <person name="Haas B.J."/>
            <person name="Habib N."/>
            <person name="Wapinski I."/>
            <person name="Roy S."/>
            <person name="Lin M.F."/>
            <person name="Heiman D.I."/>
            <person name="Young S.K."/>
            <person name="Furuya K."/>
            <person name="Guo Y."/>
            <person name="Pidoux A."/>
            <person name="Chen H.M."/>
            <person name="Robbertse B."/>
            <person name="Goldberg J.M."/>
            <person name="Aoki K."/>
            <person name="Bayne E.H."/>
            <person name="Berlin A.M."/>
            <person name="Desjardins C.A."/>
            <person name="Dobbs E."/>
            <person name="Dukaj L."/>
            <person name="Fan L."/>
            <person name="FitzGerald M.G."/>
            <person name="French C."/>
            <person name="Gujja S."/>
            <person name="Hansen K."/>
            <person name="Keifenheim D."/>
            <person name="Levin J.Z."/>
            <person name="Mosher R.A."/>
            <person name="Mueller C.A."/>
            <person name="Pfiffner J."/>
            <person name="Priest M."/>
            <person name="Russ C."/>
            <person name="Smialowska A."/>
            <person name="Swoboda P."/>
            <person name="Sykes S.M."/>
            <person name="Vaughn M."/>
            <person name="Vengrova S."/>
            <person name="Yoder R."/>
            <person name="Zeng Q."/>
            <person name="Allshire R."/>
            <person name="Baulcombe D."/>
            <person name="Birren B.W."/>
            <person name="Brown W."/>
            <person name="Ekwall K."/>
            <person name="Kellis M."/>
            <person name="Leatherwood J."/>
            <person name="Levin H."/>
            <person name="Margalit H."/>
            <person name="Martienssen R."/>
            <person name="Nieduszynski C.A."/>
            <person name="Spatafora J.W."/>
            <person name="Friedman N."/>
            <person name="Dalgaard J.Z."/>
            <person name="Baumann P."/>
            <person name="Niki H."/>
            <person name="Regev A."/>
            <person name="Nusbaum C."/>
        </authorList>
    </citation>
    <scope>REVISION OF GENE MODEL</scope>
</reference>
<reference key="3">
    <citation type="journal article" date="2006" name="Nat. Biotechnol.">
        <title>ORFeome cloning and global analysis of protein localization in the fission yeast Schizosaccharomyces pombe.</title>
        <authorList>
            <person name="Matsuyama A."/>
            <person name="Arai R."/>
            <person name="Yashiroda Y."/>
            <person name="Shirai A."/>
            <person name="Kamata A."/>
            <person name="Sekido S."/>
            <person name="Kobayashi Y."/>
            <person name="Hashimoto A."/>
            <person name="Hamamoto M."/>
            <person name="Hiraoka Y."/>
            <person name="Horinouchi S."/>
            <person name="Yoshida M."/>
        </authorList>
    </citation>
    <scope>SUBCELLULAR LOCATION [LARGE SCALE ANALYSIS]</scope>
</reference>
<evidence type="ECO:0000256" key="1">
    <source>
        <dbReference type="SAM" id="MobiDB-lite"/>
    </source>
</evidence>
<evidence type="ECO:0000269" key="2">
    <source>
    </source>
</evidence>
<organism>
    <name type="scientific">Schizosaccharomyces pombe (strain 972 / ATCC 24843)</name>
    <name type="common">Fission yeast</name>
    <dbReference type="NCBI Taxonomy" id="284812"/>
    <lineage>
        <taxon>Eukaryota</taxon>
        <taxon>Fungi</taxon>
        <taxon>Dikarya</taxon>
        <taxon>Ascomycota</taxon>
        <taxon>Taphrinomycotina</taxon>
        <taxon>Schizosaccharomycetes</taxon>
        <taxon>Schizosaccharomycetales</taxon>
        <taxon>Schizosaccharomycetaceae</taxon>
        <taxon>Schizosaccharomyces</taxon>
    </lineage>
</organism>
<name>YEM8_SCHPO</name>
<sequence length="689" mass="75680">MTKEWECRREQIIELSKINGMTIRELQARMSKMYKFDASIRSYKRVLARWGIRVHRQRFVSPRTEEAAARTASGDVSKALDELVTQLFHARQSDKDSLAQIEANFGLKLSKRALHYRRKRLALKRPPPDSHDSPNNSIPLMANSCLLSADNSSSSTTSNPNVAPPISTLPDPVATISSSSSSHLDMGAIHPPHHSSLPPHMGVDPSTMADAHNAHSSLTPPQSGYSSMPSLPYLQQPFQIPSQRFSRQQQSHPFPAAQHAVNGQPQALYPFIYQSRNVPMGSTMFASSNQSAAHPDGNNALPMDNTHANISYMQSSQSMPVNSYSYDRYTPNQPSYLESKPGNHQPSYTSEQPMYSTASVPQQISNGPTAVNGLPMNSYTPHSNHLHSPSPNSNSGPTDSLSAPNSTSSPSMAHANGASFASQYPSLNKSIFPASYSSSAEDGQNMQAPAHAYMQSSIYGVNQEQKSEYPSNLSMQSSMSIKDPSQLQRIHLYPQHSQYDPNGMTMRDHYSERIEPEAKPSDETLTVRSSRDLSVHNVGTLPVLSAAAATQAAMPHTMGPSAHDSASAPSPHMQSQQALPYQYYNPLPAMADPAQNVPQQLPPPIHSHLSDDQHIQYSYPNTFVNRFPQNIHHPSANLLDASAALNPVQNPLLMPQQNHEHSPLVRSDAALHDHGPLLPVYPDVDSRFV</sequence>
<dbReference type="EMBL" id="CU329670">
    <property type="protein sequence ID" value="CAB16253.3"/>
    <property type="molecule type" value="Genomic_DNA"/>
</dbReference>
<dbReference type="PIR" id="T38496">
    <property type="entry name" value="T38496"/>
</dbReference>
<dbReference type="BioGRID" id="279122">
    <property type="interactions" value="29"/>
</dbReference>
<dbReference type="STRING" id="284812.O14030"/>
<dbReference type="iPTMnet" id="O14030"/>
<dbReference type="PaxDb" id="4896-SPAC29B12.08.1"/>
<dbReference type="EnsemblFungi" id="SPAC29B12.08.1">
    <property type="protein sequence ID" value="SPAC29B12.08.1:pep"/>
    <property type="gene ID" value="SPAC29B12.08"/>
</dbReference>
<dbReference type="KEGG" id="spo:2542669"/>
<dbReference type="PomBase" id="SPAC29B12.08"/>
<dbReference type="VEuPathDB" id="FungiDB:SPAC29B12.08"/>
<dbReference type="HOGENOM" id="CLU_399640_0_0_1"/>
<dbReference type="InParanoid" id="O14030"/>
<dbReference type="OMA" id="EWDCRRE"/>
<dbReference type="PRO" id="PR:O14030"/>
<dbReference type="Proteomes" id="UP000002485">
    <property type="component" value="Chromosome I"/>
</dbReference>
<dbReference type="GO" id="GO:0005737">
    <property type="term" value="C:cytoplasm"/>
    <property type="evidence" value="ECO:0007005"/>
    <property type="project" value="PomBase"/>
</dbReference>
<dbReference type="GO" id="GO:0005634">
    <property type="term" value="C:nucleus"/>
    <property type="evidence" value="ECO:0000314"/>
    <property type="project" value="PomBase"/>
</dbReference>
<dbReference type="GO" id="GO:0030466">
    <property type="term" value="P:silent mating-type cassette heterochromatin formation"/>
    <property type="evidence" value="ECO:0000315"/>
    <property type="project" value="PomBase"/>
</dbReference>
<dbReference type="InterPro" id="IPR025676">
    <property type="entry name" value="Clr5_dom"/>
</dbReference>
<dbReference type="Pfam" id="PF14420">
    <property type="entry name" value="Clr5"/>
    <property type="match status" value="1"/>
</dbReference>
<proteinExistence type="predicted"/>
<feature type="chain" id="PRO_0000304058" description="Uncharacterized protein C29B12.08">
    <location>
        <begin position="1"/>
        <end position="689"/>
    </location>
</feature>
<feature type="region of interest" description="Disordered" evidence="1">
    <location>
        <begin position="121"/>
        <end position="206"/>
    </location>
</feature>
<feature type="region of interest" description="Disordered" evidence="1">
    <location>
        <begin position="286"/>
        <end position="305"/>
    </location>
</feature>
<feature type="region of interest" description="Disordered" evidence="1">
    <location>
        <begin position="322"/>
        <end position="414"/>
    </location>
</feature>
<feature type="region of interest" description="Disordered" evidence="1">
    <location>
        <begin position="552"/>
        <end position="611"/>
    </location>
</feature>
<feature type="compositionally biased region" description="Low complexity" evidence="1">
    <location>
        <begin position="133"/>
        <end position="158"/>
    </location>
</feature>
<feature type="compositionally biased region" description="Polar residues" evidence="1">
    <location>
        <begin position="322"/>
        <end position="380"/>
    </location>
</feature>
<feature type="compositionally biased region" description="Low complexity" evidence="1">
    <location>
        <begin position="381"/>
        <end position="411"/>
    </location>
</feature>
<feature type="compositionally biased region" description="Low complexity" evidence="1">
    <location>
        <begin position="560"/>
        <end position="572"/>
    </location>
</feature>
<protein>
    <recommendedName>
        <fullName>Uncharacterized protein C29B12.08</fullName>
    </recommendedName>
</protein>